<comment type="function">
    <text evidence="6">Lytic polysaccharide monooxygenase (LPMO) that depolymerizes crystalline and amorphous polysaccharides via the oxidation of scissile alpha- or beta-(1-4)-glycosidic bonds, yielding C1 or C4 oxidation products (PubMed:31540984). Catalysis by LPMOs requires the reduction of the active-site copper from Cu(II) to Cu(I) by a reducing agent and H(2)O(2) or O(2) as a cosubstrate (PubMed:31540984). Active on hemicelluloses, including xylan, glucomannan, and xyloglucan (PubMed:31540984). Shows clear activity on cellooligosaccharides, generating C4 oxidation products (PubMed:31540984). Also displays activity on konjac glucomannan (KGM), a linear beta-1,4-linked mannan with randomly distributed glucosyl residues; as well as trace activity on lichenan, a linear beta-1,3-beta-1,4-glucan with a 1:2 ratio of beta-1,3 to beta-1,4 linkages (PubMed:31540984). Has no activity on ivory nut mannan (INM), a linear beta-1,4-linked mannan without substitutions (PubMed:31540984).</text>
</comment>
<comment type="catalytic activity">
    <reaction evidence="6">
        <text>[(1-&gt;4)-beta-D-glucosyl]n+m + reduced acceptor + O2 = 4-dehydro-beta-D-glucosyl-[(1-&gt;4)-beta-D-glucosyl]n-1 + [(1-&gt;4)-beta-D-glucosyl]m + acceptor + H2O.</text>
        <dbReference type="EC" id="1.14.99.56"/>
    </reaction>
</comment>
<comment type="cofactor">
    <cofactor evidence="1">
        <name>Cu(2+)</name>
        <dbReference type="ChEBI" id="CHEBI:29036"/>
    </cofactor>
    <text evidence="1">Binds 1 copper ion per subunit.</text>
</comment>
<comment type="subcellular location">
    <subcellularLocation>
        <location evidence="9">Secreted</location>
    </subcellularLocation>
</comment>
<comment type="biotechnology">
    <text evidence="2">Lignocellulose is the most abundant polymeric composite on Earth and is a recalcitrant but promising renewable substrate for industrial biotechnology applications. Together with cellobiose dehydrogenases (CDHs) an enzymatic system capable of oxidative cellulose cleavage is formed, which increases the efficiency of cellulases and put LPMOs at focus of biofuel research.</text>
</comment>
<comment type="similarity">
    <text evidence="8">Belongs to the polysaccharide monooxygenase AA9 family.</text>
</comment>
<organism>
    <name type="scientific">Malbranchea cinnamomea</name>
    <name type="common">Thermophilic fungus</name>
    <name type="synonym">Malbranchea sulfurea</name>
    <dbReference type="NCBI Taxonomy" id="5041"/>
    <lineage>
        <taxon>Eukaryota</taxon>
        <taxon>Fungi</taxon>
        <taxon>Dikarya</taxon>
        <taxon>Ascomycota</taxon>
        <taxon>Pezizomycotina</taxon>
        <taxon>Eurotiomycetes</taxon>
        <taxon>Eurotiomycetidae</taxon>
        <taxon>Onygenales</taxon>
        <taxon>Malbrancheaceae</taxon>
        <taxon>Malbranchea</taxon>
    </lineage>
</organism>
<sequence>MSPSFKSTAILGAVALAARVRAHGYVSGIVVDGAYHGGYIVDKYPYMPNPPDVVGWSTTATDLGFVAPDAFGDPDIICHRDGAPGAIHAKVNAGATIELQWNTWPESHHGPVIDYLANCNGDCSSVDKTSLKFFKISEAGLNDGSNAPGQWASDDLIANNNSWTVTIPKSIAPGNYVLRHEIIALHSAGNQNGAQNYPQCFNLEITSNGSDNPEGVLGTELYKADDPGILFNIYQPMDSYPIPGPALYTGGSSPSPNPPTSTQSPVPQPTQSPPSGSNPGNGNGDDDNDNGNETPSPSLPVEIPDDLTSRELLLVAQEIIARLLELQNQLVVSN</sequence>
<feature type="signal peptide" evidence="3">
    <location>
        <begin position="1"/>
        <end position="22"/>
    </location>
</feature>
<feature type="chain" id="PRO_5023817932" description="AA9 family lytic polysaccharide monooxygenase A">
    <location>
        <begin position="23"/>
        <end position="334"/>
    </location>
</feature>
<feature type="region of interest" description="Disordered" evidence="5">
    <location>
        <begin position="244"/>
        <end position="304"/>
    </location>
</feature>
<feature type="compositionally biased region" description="Low complexity" evidence="5">
    <location>
        <begin position="249"/>
        <end position="265"/>
    </location>
</feature>
<feature type="binding site" evidence="2">
    <location>
        <position position="23"/>
    </location>
    <ligand>
        <name>Cu(2+)</name>
        <dbReference type="ChEBI" id="CHEBI:29036"/>
        <note>catalytic</note>
    </ligand>
</feature>
<feature type="binding site" evidence="2">
    <location>
        <position position="108"/>
    </location>
    <ligand>
        <name>Cu(2+)</name>
        <dbReference type="ChEBI" id="CHEBI:29036"/>
        <note>catalytic</note>
    </ligand>
</feature>
<feature type="binding site" evidence="1">
    <location>
        <position position="186"/>
    </location>
    <ligand>
        <name>O2</name>
        <dbReference type="ChEBI" id="CHEBI:15379"/>
    </ligand>
</feature>
<feature type="binding site" evidence="1">
    <location>
        <position position="195"/>
    </location>
    <ligand>
        <name>O2</name>
        <dbReference type="ChEBI" id="CHEBI:15379"/>
    </ligand>
</feature>
<feature type="binding site" evidence="2">
    <location>
        <position position="197"/>
    </location>
    <ligand>
        <name>Cu(2+)</name>
        <dbReference type="ChEBI" id="CHEBI:29036"/>
        <note>catalytic</note>
    </ligand>
</feature>
<feature type="glycosylation site" description="N-linked (GlcNAc...) asparagine" evidence="4">
    <location>
        <position position="160"/>
    </location>
</feature>
<feature type="glycosylation site" description="N-linked (GlcNAc...) asparagine" evidence="4">
    <location>
        <position position="208"/>
    </location>
</feature>
<feature type="disulfide bond" evidence="2">
    <location>
        <begin position="78"/>
        <end position="200"/>
    </location>
</feature>
<feature type="disulfide bond" evidence="2">
    <location>
        <begin position="119"/>
        <end position="123"/>
    </location>
</feature>
<accession>A0A5J6BJT3</accession>
<protein>
    <recommendedName>
        <fullName evidence="7">AA9 family lytic polysaccharide monooxygenase A</fullName>
        <shortName evidence="7">AA9A</shortName>
        <shortName evidence="7">LPMO9A</shortName>
        <ecNumber evidence="6">1.14.99.56</ecNumber>
    </recommendedName>
    <alternativeName>
        <fullName evidence="8">Cellulase LPMO9A</fullName>
    </alternativeName>
    <alternativeName>
        <fullName evidence="8">Endo-beta-1,4-glucanase LPMO9A</fullName>
        <shortName evidence="8">Endoglucanase LPMO9A</shortName>
    </alternativeName>
    <alternativeName>
        <fullName evidence="8">Glycosyl hydrolase 61 family protein LPMO9A</fullName>
    </alternativeName>
</protein>
<dbReference type="EC" id="1.14.99.56" evidence="6"/>
<dbReference type="EMBL" id="MK135883">
    <property type="protein sequence ID" value="QDV60866.1"/>
    <property type="molecule type" value="Genomic_DNA"/>
</dbReference>
<dbReference type="SMR" id="A0A5J6BJT3"/>
<dbReference type="GO" id="GO:0005576">
    <property type="term" value="C:extracellular region"/>
    <property type="evidence" value="ECO:0007669"/>
    <property type="project" value="UniProtKB-SubCell"/>
</dbReference>
<dbReference type="GO" id="GO:0046872">
    <property type="term" value="F:metal ion binding"/>
    <property type="evidence" value="ECO:0007669"/>
    <property type="project" value="UniProtKB-KW"/>
</dbReference>
<dbReference type="GO" id="GO:0004497">
    <property type="term" value="F:monooxygenase activity"/>
    <property type="evidence" value="ECO:0007669"/>
    <property type="project" value="UniProtKB-KW"/>
</dbReference>
<dbReference type="GO" id="GO:0030245">
    <property type="term" value="P:cellulose catabolic process"/>
    <property type="evidence" value="ECO:0007669"/>
    <property type="project" value="UniProtKB-KW"/>
</dbReference>
<dbReference type="CDD" id="cd21175">
    <property type="entry name" value="LPMO_AA9"/>
    <property type="match status" value="1"/>
</dbReference>
<dbReference type="Gene3D" id="2.70.50.70">
    <property type="match status" value="1"/>
</dbReference>
<dbReference type="InterPro" id="IPR049892">
    <property type="entry name" value="AA9"/>
</dbReference>
<dbReference type="InterPro" id="IPR005103">
    <property type="entry name" value="AA9_LPMO"/>
</dbReference>
<dbReference type="PANTHER" id="PTHR33353:SF34">
    <property type="entry name" value="ENDO-BETA-1,4-GLUCANASE D"/>
    <property type="match status" value="1"/>
</dbReference>
<dbReference type="PANTHER" id="PTHR33353">
    <property type="entry name" value="PUTATIVE (AFU_ORTHOLOGUE AFUA_1G12560)-RELATED"/>
    <property type="match status" value="1"/>
</dbReference>
<dbReference type="Pfam" id="PF03443">
    <property type="entry name" value="AA9"/>
    <property type="match status" value="1"/>
</dbReference>
<proteinExistence type="evidence at protein level"/>
<keyword id="KW-0119">Carbohydrate metabolism</keyword>
<keyword id="KW-0136">Cellulose degradation</keyword>
<keyword id="KW-0186">Copper</keyword>
<keyword id="KW-1015">Disulfide bond</keyword>
<keyword id="KW-0325">Glycoprotein</keyword>
<keyword id="KW-0479">Metal-binding</keyword>
<keyword id="KW-0503">Monooxygenase</keyword>
<keyword id="KW-0560">Oxidoreductase</keyword>
<keyword id="KW-0624">Polysaccharide degradation</keyword>
<keyword id="KW-0964">Secreted</keyword>
<keyword id="KW-0732">Signal</keyword>
<gene>
    <name evidence="7" type="primary">LPMO9A</name>
    <name evidence="7" type="synonym">AA9A</name>
</gene>
<reference key="1">
    <citation type="journal article" date="2019" name="Appl. Environ. Microbiol.">
        <title>Specific xylan activity revealed for AA9 lytic polysaccharide monooxygenases of the thermophilic fungus Malbranchea cinnamomea by functional characterization.</title>
        <authorList>
            <person name="Huettner S."/>
            <person name="Varnai A."/>
            <person name="Petrovic D.M."/>
            <person name="Bach C.X."/>
            <person name="Kim Anh D.T."/>
            <person name="Thanh V.N."/>
            <person name="Eijsink V.G.H."/>
            <person name="Larsbrink J."/>
            <person name="Olsson L."/>
        </authorList>
    </citation>
    <scope>NUCLEOTIDE SEQUENCE [GENOMIC DNA]</scope>
    <scope>FUNCTION</scope>
    <scope>CATALYTIC ACTIVITY</scope>
    <source>
        <strain>FCH 10.5</strain>
    </source>
</reference>
<evidence type="ECO:0000250" key="1">
    <source>
        <dbReference type="UniProtKB" id="Q1K8B6"/>
    </source>
</evidence>
<evidence type="ECO:0000250" key="2">
    <source>
        <dbReference type="UniProtKB" id="Q7Z9M7"/>
    </source>
</evidence>
<evidence type="ECO:0000255" key="3"/>
<evidence type="ECO:0000255" key="4">
    <source>
        <dbReference type="PROSITE-ProRule" id="PRU00498"/>
    </source>
</evidence>
<evidence type="ECO:0000256" key="5">
    <source>
        <dbReference type="SAM" id="MobiDB-lite"/>
    </source>
</evidence>
<evidence type="ECO:0000269" key="6">
    <source>
    </source>
</evidence>
<evidence type="ECO:0000303" key="7">
    <source>
    </source>
</evidence>
<evidence type="ECO:0000305" key="8"/>
<evidence type="ECO:0000305" key="9">
    <source>
    </source>
</evidence>
<name>LP9A_MALCI</name>